<keyword id="KW-0007">Acetylation</keyword>
<keyword id="KW-0040">ANK repeat</keyword>
<keyword id="KW-0963">Cytoplasm</keyword>
<keyword id="KW-0539">Nucleus</keyword>
<keyword id="KW-0597">Phosphoprotein</keyword>
<keyword id="KW-1185">Reference proteome</keyword>
<keyword id="KW-0677">Repeat</keyword>
<gene>
    <name type="primary">MTPN</name>
</gene>
<reference key="1">
    <citation type="submission" date="2005-08" db="EMBL/GenBank/DDBJ databases">
        <authorList>
            <consortium name="NIH - Mammalian Gene Collection (MGC) project"/>
        </authorList>
    </citation>
    <scope>NUCLEOTIDE SEQUENCE [LARGE SCALE MRNA]</scope>
    <source>
        <strain>Crossbred X Angus</strain>
        <tissue>Ileum</tissue>
    </source>
</reference>
<comment type="function">
    <text evidence="1">Promotes dimerization of NF-kappa-B subunits and regulates NF-kappa-B transcription factor activity. Promotes growth of cardiomyocytes, but not cardiomyocyte proliferation. Promotes cardiac muscle hypertrophy. Plays a role in the regulation of the growth of actin filaments. Inhibits the activity of the F-actin-capping protein complex formed by the CAPZA1 and CAPZB heterodimer (By similarity).</text>
</comment>
<comment type="subunit">
    <text evidence="1">Interacts with RELA. Interacts with the heterodimer formed by CAPZA1 and CAPZB (By similarity).</text>
</comment>
<comment type="interaction">
    <interactant intactId="EBI-2128107">
        <id>Q3T0F7</id>
    </interactant>
    <interactant intactId="EBI-2128126">
        <id>P79136</id>
        <label>CAPZB</label>
    </interactant>
    <organismsDiffer>false</organismsDiffer>
    <experiments>2</experiments>
</comment>
<comment type="subcellular location">
    <subcellularLocation>
        <location evidence="1">Cytoplasm</location>
    </subcellularLocation>
    <subcellularLocation>
        <location evidence="1">Nucleus</location>
    </subcellularLocation>
    <subcellularLocation>
        <location evidence="1">Cytoplasm</location>
        <location evidence="1">Perinuclear region</location>
    </subcellularLocation>
</comment>
<comment type="similarity">
    <text evidence="4">Belongs to the myotrophin family.</text>
</comment>
<sequence length="118" mass="12895">MCDKEFMWALKNGDLDEVKDYVAKGEDVNRTLEGGRKPLHYAADCGQLEILEFLLLKGADINAPDKHHITPLLSAVYEGHVSCVKLLLSKGADKTVKGPDGLTAFEATDNQAIKALLQ</sequence>
<name>MTPN_BOVIN</name>
<feature type="initiator methionine" description="Removed" evidence="3">
    <location>
        <position position="1"/>
    </location>
</feature>
<feature type="chain" id="PRO_0000240132" description="Myotrophin">
    <location>
        <begin position="2"/>
        <end position="118"/>
    </location>
</feature>
<feature type="repeat" description="ANK 1">
    <location>
        <begin position="2"/>
        <end position="30"/>
    </location>
</feature>
<feature type="repeat" description="ANK 2">
    <location>
        <begin position="34"/>
        <end position="66"/>
    </location>
</feature>
<feature type="repeat" description="ANK 3">
    <location>
        <begin position="67"/>
        <end position="99"/>
    </location>
</feature>
<feature type="modified residue" description="N-acetylcysteine" evidence="3">
    <location>
        <position position="2"/>
    </location>
</feature>
<feature type="modified residue" description="N6-acetyllysine" evidence="2">
    <location>
        <position position="4"/>
    </location>
</feature>
<feature type="modified residue" description="N6-acetyllysine" evidence="2">
    <location>
        <position position="11"/>
    </location>
</feature>
<feature type="modified residue" description="N6-acetyllysine" evidence="2">
    <location>
        <position position="24"/>
    </location>
</feature>
<feature type="modified residue" description="Phosphothreonine" evidence="2">
    <location>
        <position position="31"/>
    </location>
</feature>
<protein>
    <recommendedName>
        <fullName>Myotrophin</fullName>
    </recommendedName>
</protein>
<organism>
    <name type="scientific">Bos taurus</name>
    <name type="common">Bovine</name>
    <dbReference type="NCBI Taxonomy" id="9913"/>
    <lineage>
        <taxon>Eukaryota</taxon>
        <taxon>Metazoa</taxon>
        <taxon>Chordata</taxon>
        <taxon>Craniata</taxon>
        <taxon>Vertebrata</taxon>
        <taxon>Euteleostomi</taxon>
        <taxon>Mammalia</taxon>
        <taxon>Eutheria</taxon>
        <taxon>Laurasiatheria</taxon>
        <taxon>Artiodactyla</taxon>
        <taxon>Ruminantia</taxon>
        <taxon>Pecora</taxon>
        <taxon>Bovidae</taxon>
        <taxon>Bovinae</taxon>
        <taxon>Bos</taxon>
    </lineage>
</organism>
<accession>Q3T0F7</accession>
<proteinExistence type="evidence at protein level"/>
<dbReference type="EMBL" id="BC102413">
    <property type="protein sequence ID" value="AAI02414.1"/>
    <property type="molecule type" value="mRNA"/>
</dbReference>
<dbReference type="RefSeq" id="NP_976238.2">
    <property type="nucleotide sequence ID" value="NM_203362.2"/>
</dbReference>
<dbReference type="BMRB" id="Q3T0F7"/>
<dbReference type="SMR" id="Q3T0F7"/>
<dbReference type="FunCoup" id="Q3T0F7">
    <property type="interactions" value="2286"/>
</dbReference>
<dbReference type="IntAct" id="Q3T0F7">
    <property type="interactions" value="1"/>
</dbReference>
<dbReference type="STRING" id="9913.ENSBTAP00000010269"/>
<dbReference type="PaxDb" id="9913-ENSBTAP00000010269"/>
<dbReference type="PeptideAtlas" id="Q3T0F7"/>
<dbReference type="Ensembl" id="ENSBTAT00000010269.4">
    <property type="protein sequence ID" value="ENSBTAP00000010269.3"/>
    <property type="gene ID" value="ENSBTAG00000007806.5"/>
</dbReference>
<dbReference type="GeneID" id="541099"/>
<dbReference type="KEGG" id="bta:541099"/>
<dbReference type="CTD" id="136319"/>
<dbReference type="VEuPathDB" id="HostDB:ENSBTAG00000007806"/>
<dbReference type="VGNC" id="VGNC:50020">
    <property type="gene designation" value="MTPN"/>
</dbReference>
<dbReference type="eggNOG" id="KOG4214">
    <property type="taxonomic scope" value="Eukaryota"/>
</dbReference>
<dbReference type="GeneTree" id="ENSGT00430000031071"/>
<dbReference type="HOGENOM" id="CLU_000134_45_7_1"/>
<dbReference type="InParanoid" id="Q3T0F7"/>
<dbReference type="OMA" id="TALIDCT"/>
<dbReference type="OrthoDB" id="194358at2759"/>
<dbReference type="TreeFam" id="TF327387"/>
<dbReference type="Proteomes" id="UP000009136">
    <property type="component" value="Chromosome 4"/>
</dbReference>
<dbReference type="Bgee" id="ENSBTAG00000007806">
    <property type="expression patterns" value="Expressed in occipital lobe and 108 other cell types or tissues"/>
</dbReference>
<dbReference type="GO" id="GO:0030424">
    <property type="term" value="C:axon"/>
    <property type="evidence" value="ECO:0000250"/>
    <property type="project" value="AgBase"/>
</dbReference>
<dbReference type="GO" id="GO:0005737">
    <property type="term" value="C:cytoplasm"/>
    <property type="evidence" value="ECO:0000250"/>
    <property type="project" value="AgBase"/>
</dbReference>
<dbReference type="GO" id="GO:0005829">
    <property type="term" value="C:cytosol"/>
    <property type="evidence" value="ECO:0000250"/>
    <property type="project" value="UniProtKB"/>
</dbReference>
<dbReference type="GO" id="GO:0005634">
    <property type="term" value="C:nucleus"/>
    <property type="evidence" value="ECO:0000250"/>
    <property type="project" value="UniProtKB"/>
</dbReference>
<dbReference type="GO" id="GO:0048471">
    <property type="term" value="C:perinuclear region of cytoplasm"/>
    <property type="evidence" value="ECO:0007669"/>
    <property type="project" value="UniProtKB-SubCell"/>
</dbReference>
<dbReference type="GO" id="GO:0010613">
    <property type="term" value="P:positive regulation of cardiac muscle hypertrophy"/>
    <property type="evidence" value="ECO:0000250"/>
    <property type="project" value="UniProtKB"/>
</dbReference>
<dbReference type="GO" id="GO:0030307">
    <property type="term" value="P:positive regulation of cell growth"/>
    <property type="evidence" value="ECO:0000250"/>
    <property type="project" value="UniProtKB"/>
</dbReference>
<dbReference type="GO" id="GO:0010557">
    <property type="term" value="P:positive regulation of macromolecule biosynthetic process"/>
    <property type="evidence" value="ECO:0000250"/>
    <property type="project" value="UniProtKB"/>
</dbReference>
<dbReference type="GO" id="GO:0051092">
    <property type="term" value="P:positive regulation of NF-kappaB transcription factor activity"/>
    <property type="evidence" value="ECO:0000250"/>
    <property type="project" value="UniProtKB"/>
</dbReference>
<dbReference type="GO" id="GO:0051247">
    <property type="term" value="P:positive regulation of protein metabolic process"/>
    <property type="evidence" value="ECO:0000250"/>
    <property type="project" value="UniProtKB"/>
</dbReference>
<dbReference type="GO" id="GO:2000812">
    <property type="term" value="P:regulation of barbed-end actin filament capping"/>
    <property type="evidence" value="ECO:0000250"/>
    <property type="project" value="UniProtKB"/>
</dbReference>
<dbReference type="FunFam" id="1.25.40.20:FF:000118">
    <property type="entry name" value="Myotrophin"/>
    <property type="match status" value="1"/>
</dbReference>
<dbReference type="Gene3D" id="1.25.40.20">
    <property type="entry name" value="Ankyrin repeat-containing domain"/>
    <property type="match status" value="1"/>
</dbReference>
<dbReference type="InterPro" id="IPR002110">
    <property type="entry name" value="Ankyrin_rpt"/>
</dbReference>
<dbReference type="InterPro" id="IPR036770">
    <property type="entry name" value="Ankyrin_rpt-contain_sf"/>
</dbReference>
<dbReference type="PANTHER" id="PTHR24171">
    <property type="entry name" value="ANKYRIN REPEAT DOMAIN-CONTAINING PROTEIN 39-RELATED"/>
    <property type="match status" value="1"/>
</dbReference>
<dbReference type="PANTHER" id="PTHR24171:SF8">
    <property type="entry name" value="BRCA1-ASSOCIATED RING DOMAIN PROTEIN 1"/>
    <property type="match status" value="1"/>
</dbReference>
<dbReference type="Pfam" id="PF12796">
    <property type="entry name" value="Ank_2"/>
    <property type="match status" value="1"/>
</dbReference>
<dbReference type="PRINTS" id="PR01415">
    <property type="entry name" value="ANKYRIN"/>
</dbReference>
<dbReference type="SMART" id="SM00248">
    <property type="entry name" value="ANK"/>
    <property type="match status" value="2"/>
</dbReference>
<dbReference type="SUPFAM" id="SSF48403">
    <property type="entry name" value="Ankyrin repeat"/>
    <property type="match status" value="1"/>
</dbReference>
<dbReference type="PROSITE" id="PS50297">
    <property type="entry name" value="ANK_REP_REGION"/>
    <property type="match status" value="1"/>
</dbReference>
<dbReference type="PROSITE" id="PS50088">
    <property type="entry name" value="ANK_REPEAT"/>
    <property type="match status" value="2"/>
</dbReference>
<evidence type="ECO:0000250" key="1"/>
<evidence type="ECO:0000250" key="2">
    <source>
        <dbReference type="UniProtKB" id="P58546"/>
    </source>
</evidence>
<evidence type="ECO:0000250" key="3">
    <source>
        <dbReference type="UniProtKB" id="P62774"/>
    </source>
</evidence>
<evidence type="ECO:0000305" key="4"/>